<sequence length="244" mass="25539">MAASARPVGVGGERATSFAMACSLLSRYVRQNGAAAAELGLGIRGEGEAPRAAPATMSLLPGEAERKKETMELFPQSAGFGQQDAITADSAADAREQEPEKRQLTIFYGGKVLVFNDFPADKAKGLMQLASKGSPVAPQNAAAPAPAAVTDNTKAPMAVPAPVSSLPTAQADAQKPARANASDMPIARKASLHRFLEKRKDRLNAKTPYQASPSDATPVKKEPESQPWLGLGPNAVVKPIERGQ</sequence>
<proteinExistence type="evidence at protein level"/>
<reference key="1">
    <citation type="journal article" date="2005" name="Nature">
        <title>The map-based sequence of the rice genome.</title>
        <authorList>
            <consortium name="International rice genome sequencing project (IRGSP)"/>
        </authorList>
    </citation>
    <scope>NUCLEOTIDE SEQUENCE [LARGE SCALE GENOMIC DNA]</scope>
    <source>
        <strain>cv. Nipponbare</strain>
    </source>
</reference>
<reference key="2">
    <citation type="journal article" date="2008" name="Nucleic Acids Res.">
        <title>The rice annotation project database (RAP-DB): 2008 update.</title>
        <authorList>
            <consortium name="The rice annotation project (RAP)"/>
        </authorList>
    </citation>
    <scope>GENOME REANNOTATION</scope>
    <source>
        <strain>cv. Nipponbare</strain>
    </source>
</reference>
<reference key="3">
    <citation type="journal article" date="2013" name="Rice">
        <title>Improvement of the Oryza sativa Nipponbare reference genome using next generation sequence and optical map data.</title>
        <authorList>
            <person name="Kawahara Y."/>
            <person name="de la Bastide M."/>
            <person name="Hamilton J.P."/>
            <person name="Kanamori H."/>
            <person name="McCombie W.R."/>
            <person name="Ouyang S."/>
            <person name="Schwartz D.C."/>
            <person name="Tanaka T."/>
            <person name="Wu J."/>
            <person name="Zhou S."/>
            <person name="Childs K.L."/>
            <person name="Davidson R.M."/>
            <person name="Lin H."/>
            <person name="Quesada-Ocampo L."/>
            <person name="Vaillancourt B."/>
            <person name="Sakai H."/>
            <person name="Lee S.S."/>
            <person name="Kim J."/>
            <person name="Numa H."/>
            <person name="Itoh T."/>
            <person name="Buell C.R."/>
            <person name="Matsumoto T."/>
        </authorList>
    </citation>
    <scope>GENOME REANNOTATION</scope>
    <source>
        <strain>cv. Nipponbare</strain>
    </source>
</reference>
<reference key="4">
    <citation type="journal article" date="2003" name="Science">
        <title>Collection, mapping, and annotation of over 28,000 cDNA clones from japonica rice.</title>
        <authorList>
            <consortium name="The rice full-length cDNA consortium"/>
        </authorList>
    </citation>
    <scope>NUCLEOTIDE SEQUENCE [LARGE SCALE MRNA]</scope>
    <source>
        <strain>cv. Nipponbare</strain>
    </source>
</reference>
<reference key="5">
    <citation type="journal article" date="2009" name="Plant Mol. Biol.">
        <title>Identification and expression profiling analysis of TIFY family genes involved in stress and phytohormone responses in rice.</title>
        <authorList>
            <person name="Ye H."/>
            <person name="Du H."/>
            <person name="Tang N."/>
            <person name="Li X."/>
            <person name="Xiong L."/>
        </authorList>
    </citation>
    <scope>GENE FAMILY</scope>
    <scope>NOMENCLATURE</scope>
    <scope>INDUCTION</scope>
</reference>
<reference key="6">
    <citation type="journal article" date="2011" name="Plant J.">
        <title>OsbHLH148, a basic helix-loop-helix protein, interacts with OsJAZ proteins in a jasmonate signaling pathway leading to drought tolerance in rice.</title>
        <authorList>
            <person name="Seo J.S."/>
            <person name="Joo J."/>
            <person name="Kim M.J."/>
            <person name="Kim Y.K."/>
            <person name="Nahm B.H."/>
            <person name="Song S.I."/>
            <person name="Cheong J.J."/>
            <person name="Lee J.S."/>
            <person name="Kim J.K."/>
            <person name="Choi Y.D."/>
        </authorList>
    </citation>
    <scope>INTERACTION WITH BHLH148</scope>
</reference>
<reference key="7">
    <citation type="journal article" date="2013" name="PLoS ONE">
        <title>Oryza sativa COI homologues restore jasmonate signal transduction in Arabidopsis coi1-1 mutants.</title>
        <authorList>
            <person name="Lee H.Y."/>
            <person name="Seo J.S."/>
            <person name="Cho J.H."/>
            <person name="Jung H."/>
            <person name="Kim J.K."/>
            <person name="Lee J.S."/>
            <person name="Rhee S."/>
            <person name="Do Choi Y."/>
        </authorList>
    </citation>
    <scope>INTERACTION WITH COI1A AND COI1B</scope>
</reference>
<name>TI10B_ORYSJ</name>
<accession>Q8H395</accession>
<accession>A0A0P0X913</accession>
<dbReference type="EMBL" id="AP005198">
    <property type="protein sequence ID" value="BAC16504.1"/>
    <property type="molecule type" value="Genomic_DNA"/>
</dbReference>
<dbReference type="EMBL" id="AP008213">
    <property type="protein sequence ID" value="BAF22182.1"/>
    <property type="molecule type" value="Genomic_DNA"/>
</dbReference>
<dbReference type="EMBL" id="AP014963">
    <property type="protein sequence ID" value="BAT02643.1"/>
    <property type="molecule type" value="Genomic_DNA"/>
</dbReference>
<dbReference type="EMBL" id="AK068566">
    <property type="protein sequence ID" value="BAG90968.1"/>
    <property type="molecule type" value="mRNA"/>
</dbReference>
<dbReference type="RefSeq" id="XP_015647536.1">
    <property type="nucleotide sequence ID" value="XM_015792050.1"/>
</dbReference>
<dbReference type="SMR" id="Q8H395"/>
<dbReference type="FunCoup" id="Q8H395">
    <property type="interactions" value="1149"/>
</dbReference>
<dbReference type="STRING" id="39947.Q8H395"/>
<dbReference type="PaxDb" id="39947-Q8H395"/>
<dbReference type="EnsemblPlants" id="Os07t0615200-01">
    <property type="protein sequence ID" value="Os07t0615200-01"/>
    <property type="gene ID" value="Os07g0615200"/>
</dbReference>
<dbReference type="Gramene" id="Os07t0615200-01">
    <property type="protein sequence ID" value="Os07t0615200-01"/>
    <property type="gene ID" value="Os07g0615200"/>
</dbReference>
<dbReference type="KEGG" id="dosa:Os07g0615200"/>
<dbReference type="eggNOG" id="ENOG502S1AU">
    <property type="taxonomic scope" value="Eukaryota"/>
</dbReference>
<dbReference type="HOGENOM" id="CLU_051749_1_1_1"/>
<dbReference type="InParanoid" id="Q8H395"/>
<dbReference type="OMA" id="ECSELMG"/>
<dbReference type="OrthoDB" id="1937734at2759"/>
<dbReference type="PlantReactome" id="R-OSA-5679411">
    <property type="pathway name" value="Gibberellin signaling"/>
</dbReference>
<dbReference type="PlantReactome" id="R-OSA-6787011">
    <property type="pathway name" value="Jasmonic acid signaling"/>
</dbReference>
<dbReference type="Proteomes" id="UP000000763">
    <property type="component" value="Chromosome 7"/>
</dbReference>
<dbReference type="Proteomes" id="UP000059680">
    <property type="component" value="Chromosome 7"/>
</dbReference>
<dbReference type="GO" id="GO:0005634">
    <property type="term" value="C:nucleus"/>
    <property type="evidence" value="ECO:0000318"/>
    <property type="project" value="GO_Central"/>
</dbReference>
<dbReference type="GO" id="GO:0031347">
    <property type="term" value="P:regulation of defense response"/>
    <property type="evidence" value="ECO:0000318"/>
    <property type="project" value="GO_Central"/>
</dbReference>
<dbReference type="GO" id="GO:2000022">
    <property type="term" value="P:regulation of jasmonic acid mediated signaling pathway"/>
    <property type="evidence" value="ECO:0000318"/>
    <property type="project" value="GO_Central"/>
</dbReference>
<dbReference type="GO" id="GO:0009611">
    <property type="term" value="P:response to wounding"/>
    <property type="evidence" value="ECO:0000318"/>
    <property type="project" value="GO_Central"/>
</dbReference>
<dbReference type="InterPro" id="IPR018467">
    <property type="entry name" value="CCT_CS"/>
</dbReference>
<dbReference type="InterPro" id="IPR040390">
    <property type="entry name" value="TIFY/JAZ"/>
</dbReference>
<dbReference type="InterPro" id="IPR010399">
    <property type="entry name" value="Tify_dom"/>
</dbReference>
<dbReference type="PANTHER" id="PTHR33077:SF140">
    <property type="entry name" value="PROTEIN TIFY 10B"/>
    <property type="match status" value="1"/>
</dbReference>
<dbReference type="PANTHER" id="PTHR33077">
    <property type="entry name" value="PROTEIN TIFY 4A-RELATED-RELATED"/>
    <property type="match status" value="1"/>
</dbReference>
<dbReference type="Pfam" id="PF09425">
    <property type="entry name" value="Jas_motif"/>
    <property type="match status" value="1"/>
</dbReference>
<dbReference type="Pfam" id="PF06200">
    <property type="entry name" value="tify"/>
    <property type="match status" value="1"/>
</dbReference>
<dbReference type="SMART" id="SM00979">
    <property type="entry name" value="TIFY"/>
    <property type="match status" value="1"/>
</dbReference>
<dbReference type="PROSITE" id="PS51320">
    <property type="entry name" value="TIFY"/>
    <property type="match status" value="1"/>
</dbReference>
<organism>
    <name type="scientific">Oryza sativa subsp. japonica</name>
    <name type="common">Rice</name>
    <dbReference type="NCBI Taxonomy" id="39947"/>
    <lineage>
        <taxon>Eukaryota</taxon>
        <taxon>Viridiplantae</taxon>
        <taxon>Streptophyta</taxon>
        <taxon>Embryophyta</taxon>
        <taxon>Tracheophyta</taxon>
        <taxon>Spermatophyta</taxon>
        <taxon>Magnoliopsida</taxon>
        <taxon>Liliopsida</taxon>
        <taxon>Poales</taxon>
        <taxon>Poaceae</taxon>
        <taxon>BOP clade</taxon>
        <taxon>Oryzoideae</taxon>
        <taxon>Oryzeae</taxon>
        <taxon>Oryzinae</taxon>
        <taxon>Oryza</taxon>
        <taxon>Oryza sativa</taxon>
    </lineage>
</organism>
<feature type="chain" id="PRO_0000434849" description="Protein TIFY 10b">
    <location>
        <begin position="1"/>
        <end position="244"/>
    </location>
</feature>
<feature type="domain" description="Tify" evidence="3">
    <location>
        <begin position="97"/>
        <end position="132"/>
    </location>
</feature>
<feature type="region of interest" description="Disordered" evidence="5">
    <location>
        <begin position="174"/>
        <end position="244"/>
    </location>
</feature>
<feature type="short sequence motif" description="Jas" evidence="2">
    <location>
        <begin position="185"/>
        <end position="210"/>
    </location>
</feature>
<feature type="short sequence motif" description="Nuclear localization signal" evidence="4">
    <location>
        <begin position="187"/>
        <end position="194"/>
    </location>
</feature>
<feature type="compositionally biased region" description="Basic and acidic residues" evidence="5">
    <location>
        <begin position="194"/>
        <end position="204"/>
    </location>
</feature>
<comment type="function">
    <text evidence="1">Repressor of jasmonate responses.</text>
</comment>
<comment type="subunit">
    <text evidence="7 8">Interacts with BHLH148 (PubMed:21332845). Interacts with COI1A and COI1B in a coronatine-dependent manner. Coronatine is an analog of jasmonoyl isoleucine (JA-Ile) (PubMed:23320078).</text>
</comment>
<comment type="subcellular location">
    <subcellularLocation>
        <location evidence="4">Nucleus</location>
    </subcellularLocation>
</comment>
<comment type="induction">
    <text evidence="6">By jasmonate, wounding, and cold, drought and salt stresses. Down-regulated by abscisic acid (ABA).</text>
</comment>
<comment type="domain">
    <text evidence="1">The jas domain (185-210) is required for interaction with COI1.</text>
</comment>
<comment type="PTM">
    <text evidence="1">Ubiquitinated. Targeted for degradation by the SCF(COI1) E3 ubiquitin ligase-proteasome pathway during jasmonate signaling.</text>
</comment>
<comment type="similarity">
    <text evidence="11">Belongs to the TIFY/JAZ family.</text>
</comment>
<evidence type="ECO:0000250" key="1">
    <source>
        <dbReference type="UniProtKB" id="Q7XPM8"/>
    </source>
</evidence>
<evidence type="ECO:0000255" key="2"/>
<evidence type="ECO:0000255" key="3">
    <source>
        <dbReference type="PROSITE-ProRule" id="PRU00650"/>
    </source>
</evidence>
<evidence type="ECO:0000255" key="4">
    <source>
        <dbReference type="PROSITE-ProRule" id="PRU00768"/>
    </source>
</evidence>
<evidence type="ECO:0000256" key="5">
    <source>
        <dbReference type="SAM" id="MobiDB-lite"/>
    </source>
</evidence>
<evidence type="ECO:0000269" key="6">
    <source>
    </source>
</evidence>
<evidence type="ECO:0000269" key="7">
    <source>
    </source>
</evidence>
<evidence type="ECO:0000269" key="8">
    <source>
    </source>
</evidence>
<evidence type="ECO:0000303" key="9">
    <source>
    </source>
</evidence>
<evidence type="ECO:0000303" key="10">
    <source>
    </source>
</evidence>
<evidence type="ECO:0000305" key="11"/>
<evidence type="ECO:0000312" key="12">
    <source>
        <dbReference type="EMBL" id="BAC16504.1"/>
    </source>
</evidence>
<evidence type="ECO:0000312" key="13">
    <source>
        <dbReference type="EMBL" id="BAF22182.1"/>
    </source>
</evidence>
<keyword id="KW-1184">Jasmonic acid signaling pathway</keyword>
<keyword id="KW-0539">Nucleus</keyword>
<keyword id="KW-1185">Reference proteome</keyword>
<keyword id="KW-0804">Transcription</keyword>
<keyword id="KW-0805">Transcription regulation</keyword>
<keyword id="KW-0832">Ubl conjugation</keyword>
<protein>
    <recommendedName>
        <fullName evidence="11">Protein TIFY 10b</fullName>
        <shortName evidence="9">OsTIFY10b</shortName>
    </recommendedName>
    <alternativeName>
        <fullName evidence="11">Jasmonate ZIM domain-containing protein 7</fullName>
        <shortName evidence="9">OsJAZ7</shortName>
    </alternativeName>
    <alternativeName>
        <fullName evidence="10">OsJAZ6</fullName>
    </alternativeName>
</protein>
<gene>
    <name evidence="9" type="primary">TIFY10B</name>
    <name evidence="9" type="synonym">JAZ7</name>
    <name evidence="13" type="ordered locus">Os07g0615200</name>
    <name evidence="11" type="ordered locus">LOC_Os07g42370</name>
    <name evidence="12" type="ORF">P0616D06.125</name>
</gene>